<sequence>MAKTPTRSRKRVKKQVADGMAHVHASFNNTIITITDRQGNALAWATAGGSGFRGSRKSTPFAAQVAAERAGEMAKEYGLKNLEVFVNGPGPGRESSIRALNAVGYKITNITDVTPIPHNGCRPPKKRRV</sequence>
<feature type="chain" id="PRO_0000123159" description="Small ribosomal subunit protein uS11">
    <location>
        <begin position="1"/>
        <end position="129"/>
    </location>
</feature>
<evidence type="ECO:0000255" key="1">
    <source>
        <dbReference type="HAMAP-Rule" id="MF_01310"/>
    </source>
</evidence>
<evidence type="ECO:0000305" key="2"/>
<comment type="function">
    <text evidence="1">Located on the platform of the 30S subunit, it bridges several disparate RNA helices of the 16S rRNA. Forms part of the Shine-Dalgarno cleft in the 70S ribosome.</text>
</comment>
<comment type="subunit">
    <text evidence="1">Part of the 30S ribosomal subunit. Interacts with proteins S7 and S18. Binds to IF-3.</text>
</comment>
<comment type="similarity">
    <text evidence="1">Belongs to the universal ribosomal protein uS11 family.</text>
</comment>
<name>RS11_IDILO</name>
<accession>Q5QXV6</accession>
<organism>
    <name type="scientific">Idiomarina loihiensis (strain ATCC BAA-735 / DSM 15497 / L2-TR)</name>
    <dbReference type="NCBI Taxonomy" id="283942"/>
    <lineage>
        <taxon>Bacteria</taxon>
        <taxon>Pseudomonadati</taxon>
        <taxon>Pseudomonadota</taxon>
        <taxon>Gammaproteobacteria</taxon>
        <taxon>Alteromonadales</taxon>
        <taxon>Idiomarinaceae</taxon>
        <taxon>Idiomarina</taxon>
    </lineage>
</organism>
<keyword id="KW-1185">Reference proteome</keyword>
<keyword id="KW-0687">Ribonucleoprotein</keyword>
<keyword id="KW-0689">Ribosomal protein</keyword>
<keyword id="KW-0694">RNA-binding</keyword>
<keyword id="KW-0699">rRNA-binding</keyword>
<proteinExistence type="inferred from homology"/>
<reference key="1">
    <citation type="journal article" date="2004" name="Proc. Natl. Acad. Sci. U.S.A.">
        <title>Genome sequence of the deep-sea gamma-proteobacterium Idiomarina loihiensis reveals amino acid fermentation as a source of carbon and energy.</title>
        <authorList>
            <person name="Hou S."/>
            <person name="Saw J.H."/>
            <person name="Lee K.S."/>
            <person name="Freitas T.A."/>
            <person name="Belisle C."/>
            <person name="Kawarabayasi Y."/>
            <person name="Donachie S.P."/>
            <person name="Pikina A."/>
            <person name="Galperin M.Y."/>
            <person name="Koonin E.V."/>
            <person name="Makarova K.S."/>
            <person name="Omelchenko M.V."/>
            <person name="Sorokin A."/>
            <person name="Wolf Y.I."/>
            <person name="Li Q.X."/>
            <person name="Keum Y.S."/>
            <person name="Campbell S."/>
            <person name="Denery J."/>
            <person name="Aizawa S."/>
            <person name="Shibata S."/>
            <person name="Malahoff A."/>
            <person name="Alam M."/>
        </authorList>
    </citation>
    <scope>NUCLEOTIDE SEQUENCE [LARGE SCALE GENOMIC DNA]</scope>
    <source>
        <strain>ATCC BAA-735 / DSM 15497 / L2-TR</strain>
    </source>
</reference>
<protein>
    <recommendedName>
        <fullName evidence="1">Small ribosomal subunit protein uS11</fullName>
    </recommendedName>
    <alternativeName>
        <fullName evidence="2">30S ribosomal protein S11</fullName>
    </alternativeName>
</protein>
<gene>
    <name evidence="1" type="primary">rpsK</name>
    <name type="ordered locus">IL1893</name>
</gene>
<dbReference type="EMBL" id="AE017340">
    <property type="protein sequence ID" value="AAV82725.1"/>
    <property type="molecule type" value="Genomic_DNA"/>
</dbReference>
<dbReference type="RefSeq" id="WP_011235125.1">
    <property type="nucleotide sequence ID" value="NC_006512.1"/>
</dbReference>
<dbReference type="SMR" id="Q5QXV6"/>
<dbReference type="STRING" id="283942.IL1893"/>
<dbReference type="GeneID" id="78252613"/>
<dbReference type="KEGG" id="ilo:IL1893"/>
<dbReference type="eggNOG" id="COG0100">
    <property type="taxonomic scope" value="Bacteria"/>
</dbReference>
<dbReference type="HOGENOM" id="CLU_072439_5_0_6"/>
<dbReference type="OrthoDB" id="9806415at2"/>
<dbReference type="Proteomes" id="UP000001171">
    <property type="component" value="Chromosome"/>
</dbReference>
<dbReference type="GO" id="GO:1990904">
    <property type="term" value="C:ribonucleoprotein complex"/>
    <property type="evidence" value="ECO:0007669"/>
    <property type="project" value="UniProtKB-KW"/>
</dbReference>
<dbReference type="GO" id="GO:0005840">
    <property type="term" value="C:ribosome"/>
    <property type="evidence" value="ECO:0007669"/>
    <property type="project" value="UniProtKB-KW"/>
</dbReference>
<dbReference type="GO" id="GO:0019843">
    <property type="term" value="F:rRNA binding"/>
    <property type="evidence" value="ECO:0007669"/>
    <property type="project" value="UniProtKB-UniRule"/>
</dbReference>
<dbReference type="GO" id="GO:0003735">
    <property type="term" value="F:structural constituent of ribosome"/>
    <property type="evidence" value="ECO:0007669"/>
    <property type="project" value="InterPro"/>
</dbReference>
<dbReference type="GO" id="GO:0006412">
    <property type="term" value="P:translation"/>
    <property type="evidence" value="ECO:0007669"/>
    <property type="project" value="UniProtKB-UniRule"/>
</dbReference>
<dbReference type="FunFam" id="3.30.420.80:FF:000001">
    <property type="entry name" value="30S ribosomal protein S11"/>
    <property type="match status" value="1"/>
</dbReference>
<dbReference type="Gene3D" id="3.30.420.80">
    <property type="entry name" value="Ribosomal protein S11"/>
    <property type="match status" value="1"/>
</dbReference>
<dbReference type="HAMAP" id="MF_01310">
    <property type="entry name" value="Ribosomal_uS11"/>
    <property type="match status" value="1"/>
</dbReference>
<dbReference type="InterPro" id="IPR001971">
    <property type="entry name" value="Ribosomal_uS11"/>
</dbReference>
<dbReference type="InterPro" id="IPR019981">
    <property type="entry name" value="Ribosomal_uS11_bac-type"/>
</dbReference>
<dbReference type="InterPro" id="IPR018102">
    <property type="entry name" value="Ribosomal_uS11_CS"/>
</dbReference>
<dbReference type="InterPro" id="IPR036967">
    <property type="entry name" value="Ribosomal_uS11_sf"/>
</dbReference>
<dbReference type="NCBIfam" id="NF003698">
    <property type="entry name" value="PRK05309.1"/>
    <property type="match status" value="1"/>
</dbReference>
<dbReference type="NCBIfam" id="TIGR03632">
    <property type="entry name" value="uS11_bact"/>
    <property type="match status" value="1"/>
</dbReference>
<dbReference type="PANTHER" id="PTHR11759">
    <property type="entry name" value="40S RIBOSOMAL PROTEIN S14/30S RIBOSOMAL PROTEIN S11"/>
    <property type="match status" value="1"/>
</dbReference>
<dbReference type="Pfam" id="PF00411">
    <property type="entry name" value="Ribosomal_S11"/>
    <property type="match status" value="1"/>
</dbReference>
<dbReference type="PIRSF" id="PIRSF002131">
    <property type="entry name" value="Ribosomal_S11"/>
    <property type="match status" value="1"/>
</dbReference>
<dbReference type="SUPFAM" id="SSF53137">
    <property type="entry name" value="Translational machinery components"/>
    <property type="match status" value="1"/>
</dbReference>
<dbReference type="PROSITE" id="PS00054">
    <property type="entry name" value="RIBOSOMAL_S11"/>
    <property type="match status" value="1"/>
</dbReference>